<sequence length="126" mass="13841">MPKEIILPEGTPPPLAPYVPATKADNIVYVSGILPLDENNDVVHVGDAAAQTRHVLETIKHILSNAGGSLKDVTFNHIFLRDWADYPAINQVYAEYFPEERPARYCVQVGLVKPDALIEIASVAHV</sequence>
<protein>
    <recommendedName>
        <fullName evidence="1">3-aminoacrylate deaminase RutC</fullName>
        <shortName evidence="1">3-AA deaminase</shortName>
        <ecNumber evidence="1">3.5.-.-</ecNumber>
    </recommendedName>
</protein>
<organism>
    <name type="scientific">Acinetobacter baylyi (strain ATCC 33305 / BD413 / ADP1)</name>
    <dbReference type="NCBI Taxonomy" id="62977"/>
    <lineage>
        <taxon>Bacteria</taxon>
        <taxon>Pseudomonadati</taxon>
        <taxon>Pseudomonadota</taxon>
        <taxon>Gammaproteobacteria</taxon>
        <taxon>Moraxellales</taxon>
        <taxon>Moraxellaceae</taxon>
        <taxon>Acinetobacter</taxon>
    </lineage>
</organism>
<feature type="chain" id="PRO_0000402708" description="3-aminoacrylate deaminase RutC">
    <location>
        <begin position="1"/>
        <end position="126"/>
    </location>
</feature>
<keyword id="KW-0378">Hydrolase</keyword>
<comment type="function">
    <text evidence="1">Involved in pyrimidine catabolism. Catalyzes the deamination of 3-aminoacrylate to malonic semialdehyde, a reaction that can also occur spontaneously. RutC may facilitate the reaction and modulate the metabolic fitness, rather than catalyzing essential functions.</text>
</comment>
<comment type="catalytic activity">
    <reaction evidence="1">
        <text>(Z)-3-aminoacrylate + H2O + H(+) = 3-oxopropanoate + NH4(+)</text>
        <dbReference type="Rhea" id="RHEA:34947"/>
        <dbReference type="ChEBI" id="CHEBI:15377"/>
        <dbReference type="ChEBI" id="CHEBI:15378"/>
        <dbReference type="ChEBI" id="CHEBI:28938"/>
        <dbReference type="ChEBI" id="CHEBI:33190"/>
        <dbReference type="ChEBI" id="CHEBI:59894"/>
    </reaction>
</comment>
<comment type="similarity">
    <text evidence="1">Belongs to the RutC family.</text>
</comment>
<name>RUTC_ACIAD</name>
<gene>
    <name evidence="1" type="primary">rutC</name>
    <name type="ordered locus">ACIAD0029</name>
</gene>
<reference key="1">
    <citation type="journal article" date="2004" name="Nucleic Acids Res.">
        <title>Unique features revealed by the genome sequence of Acinetobacter sp. ADP1, a versatile and naturally transformation competent bacterium.</title>
        <authorList>
            <person name="Barbe V."/>
            <person name="Vallenet D."/>
            <person name="Fonknechten N."/>
            <person name="Kreimeyer A."/>
            <person name="Oztas S."/>
            <person name="Labarre L."/>
            <person name="Cruveiller S."/>
            <person name="Robert C."/>
            <person name="Duprat S."/>
            <person name="Wincker P."/>
            <person name="Ornston L.N."/>
            <person name="Weissenbach J."/>
            <person name="Marliere P."/>
            <person name="Cohen G.N."/>
            <person name="Medigue C."/>
        </authorList>
    </citation>
    <scope>NUCLEOTIDE SEQUENCE [LARGE SCALE GENOMIC DNA]</scope>
    <source>
        <strain>ATCC 33305 / BD413 / ADP1</strain>
    </source>
</reference>
<accession>Q6FFZ5</accession>
<proteinExistence type="inferred from homology"/>
<evidence type="ECO:0000255" key="1">
    <source>
        <dbReference type="HAMAP-Rule" id="MF_00831"/>
    </source>
</evidence>
<dbReference type="EC" id="3.5.-.-" evidence="1"/>
<dbReference type="EMBL" id="CR543861">
    <property type="protein sequence ID" value="CAG67012.1"/>
    <property type="molecule type" value="Genomic_DNA"/>
</dbReference>
<dbReference type="RefSeq" id="WP_004930944.1">
    <property type="nucleotide sequence ID" value="NC_005966.1"/>
</dbReference>
<dbReference type="SMR" id="Q6FFZ5"/>
<dbReference type="STRING" id="202950.GCA_001485005_01777"/>
<dbReference type="GeneID" id="45232563"/>
<dbReference type="KEGG" id="aci:ACIAD0029"/>
<dbReference type="eggNOG" id="COG0251">
    <property type="taxonomic scope" value="Bacteria"/>
</dbReference>
<dbReference type="HOGENOM" id="CLU_100715_7_3_6"/>
<dbReference type="OrthoDB" id="583118at2"/>
<dbReference type="BioCyc" id="ASP62977:ACIAD_RS00155-MONOMER"/>
<dbReference type="Proteomes" id="UP000000430">
    <property type="component" value="Chromosome"/>
</dbReference>
<dbReference type="GO" id="GO:0005829">
    <property type="term" value="C:cytosol"/>
    <property type="evidence" value="ECO:0007669"/>
    <property type="project" value="TreeGrafter"/>
</dbReference>
<dbReference type="GO" id="GO:0019239">
    <property type="term" value="F:deaminase activity"/>
    <property type="evidence" value="ECO:0007669"/>
    <property type="project" value="TreeGrafter"/>
</dbReference>
<dbReference type="GO" id="GO:0019740">
    <property type="term" value="P:nitrogen utilization"/>
    <property type="evidence" value="ECO:0007669"/>
    <property type="project" value="UniProtKB-UniRule"/>
</dbReference>
<dbReference type="GO" id="GO:0006212">
    <property type="term" value="P:uracil catabolic process"/>
    <property type="evidence" value="ECO:0007669"/>
    <property type="project" value="UniProtKB-UniRule"/>
</dbReference>
<dbReference type="CDD" id="cd00448">
    <property type="entry name" value="YjgF_YER057c_UK114_family"/>
    <property type="match status" value="1"/>
</dbReference>
<dbReference type="FunFam" id="3.30.1330.40:FF:000001">
    <property type="entry name" value="L-PSP family endoribonuclease"/>
    <property type="match status" value="1"/>
</dbReference>
<dbReference type="Gene3D" id="3.30.1330.40">
    <property type="entry name" value="RutC-like"/>
    <property type="match status" value="1"/>
</dbReference>
<dbReference type="HAMAP" id="MF_00831">
    <property type="entry name" value="RutC"/>
    <property type="match status" value="1"/>
</dbReference>
<dbReference type="InterPro" id="IPR019898">
    <property type="entry name" value="RutC"/>
</dbReference>
<dbReference type="InterPro" id="IPR035959">
    <property type="entry name" value="RutC-like_sf"/>
</dbReference>
<dbReference type="InterPro" id="IPR006175">
    <property type="entry name" value="YjgF/YER057c/UK114"/>
</dbReference>
<dbReference type="NCBIfam" id="TIGR03610">
    <property type="entry name" value="RutC"/>
    <property type="match status" value="1"/>
</dbReference>
<dbReference type="PANTHER" id="PTHR11803">
    <property type="entry name" value="2-IMINOBUTANOATE/2-IMINOPROPANOATE DEAMINASE RIDA"/>
    <property type="match status" value="1"/>
</dbReference>
<dbReference type="PANTHER" id="PTHR11803:SF58">
    <property type="entry name" value="PROTEIN HMF1-RELATED"/>
    <property type="match status" value="1"/>
</dbReference>
<dbReference type="Pfam" id="PF01042">
    <property type="entry name" value="Ribonuc_L-PSP"/>
    <property type="match status" value="1"/>
</dbReference>
<dbReference type="SUPFAM" id="SSF55298">
    <property type="entry name" value="YjgF-like"/>
    <property type="match status" value="1"/>
</dbReference>